<name>HSP23_MAIZE</name>
<protein>
    <recommendedName>
        <fullName>17.0 kDa class II heat shock protein</fullName>
    </recommendedName>
    <alternativeName>
        <fullName>HSP 18</fullName>
    </alternativeName>
</protein>
<keyword id="KW-0963">Cytoplasm</keyword>
<keyword id="KW-1185">Reference proteome</keyword>
<keyword id="KW-0346">Stress response</keyword>
<reference key="1">
    <citation type="journal article" date="1993" name="Dev. Genet.">
        <title>The independent stage-specific expression of the 18-kDa heat shock protein genes during microsporogenesis in Zea mays L.</title>
        <authorList>
            <person name="Atkinson B.G."/>
            <person name="Raizada M."/>
            <person name="Bouchard R.A."/>
            <person name="Frappier R.H."/>
            <person name="Walden D.B."/>
        </authorList>
    </citation>
    <scope>NUCLEOTIDE SEQUENCE [MRNA]</scope>
    <source>
        <strain>cv. Ohio 43</strain>
    </source>
</reference>
<evidence type="ECO:0000255" key="1">
    <source>
        <dbReference type="PROSITE-ProRule" id="PRU00285"/>
    </source>
</evidence>
<accession>Q08275</accession>
<organism>
    <name type="scientific">Zea mays</name>
    <name type="common">Maize</name>
    <dbReference type="NCBI Taxonomy" id="4577"/>
    <lineage>
        <taxon>Eukaryota</taxon>
        <taxon>Viridiplantae</taxon>
        <taxon>Streptophyta</taxon>
        <taxon>Embryophyta</taxon>
        <taxon>Tracheophyta</taxon>
        <taxon>Spermatophyta</taxon>
        <taxon>Magnoliopsida</taxon>
        <taxon>Liliopsida</taxon>
        <taxon>Poales</taxon>
        <taxon>Poaceae</taxon>
        <taxon>PACMAD clade</taxon>
        <taxon>Panicoideae</taxon>
        <taxon>Andropogonodae</taxon>
        <taxon>Andropogoneae</taxon>
        <taxon>Tripsacinae</taxon>
        <taxon>Zea</taxon>
    </lineage>
</organism>
<gene>
    <name type="primary">HSP18</name>
</gene>
<sequence>MDARMFGLETPRVAALHHLLDVPDGDKAGGGATRTYVRDARAMAATPADVKELAGAYAFVVDMPGLSTGDIRVQVEDERVLVISGERRREEREDAKYLRMERRMGKFMRKFVLPDNADVDKVAAVCRDGVLTVTVEKLPPPEPKKPKTIEIKVA</sequence>
<feature type="chain" id="PRO_0000125995" description="17.0 kDa class II heat shock protein">
    <location>
        <begin position="1"/>
        <end position="154"/>
    </location>
</feature>
<feature type="domain" description="sHSP" evidence="1">
    <location>
        <begin position="39"/>
        <end position="154"/>
    </location>
</feature>
<proteinExistence type="evidence at transcript level"/>
<dbReference type="EMBL" id="S59777">
    <property type="protein sequence ID" value="AAB26481.1"/>
    <property type="molecule type" value="mRNA"/>
</dbReference>
<dbReference type="PIR" id="A48425">
    <property type="entry name" value="A48425"/>
</dbReference>
<dbReference type="RefSeq" id="NP_001105352.1">
    <property type="nucleotide sequence ID" value="NM_001111882.1"/>
</dbReference>
<dbReference type="SMR" id="Q08275"/>
<dbReference type="FunCoup" id="Q08275">
    <property type="interactions" value="267"/>
</dbReference>
<dbReference type="STRING" id="4577.Q08275"/>
<dbReference type="PaxDb" id="4577-GRMZM2G404249_P01"/>
<dbReference type="EnsemblPlants" id="Zm00001eb395360_T001">
    <property type="protein sequence ID" value="Zm00001eb395360_P001"/>
    <property type="gene ID" value="Zm00001eb395360"/>
</dbReference>
<dbReference type="EnsemblPlants" id="Zm00001eb395370_T001">
    <property type="protein sequence ID" value="Zm00001eb395370_P001"/>
    <property type="gene ID" value="Zm00001eb395370"/>
</dbReference>
<dbReference type="GeneID" id="542293"/>
<dbReference type="Gramene" id="Zm00001eb395360_T001">
    <property type="protein sequence ID" value="Zm00001eb395360_P001"/>
    <property type="gene ID" value="Zm00001eb395360"/>
</dbReference>
<dbReference type="Gramene" id="Zm00001eb395370_T001">
    <property type="protein sequence ID" value="Zm00001eb395370_P001"/>
    <property type="gene ID" value="Zm00001eb395370"/>
</dbReference>
<dbReference type="KEGG" id="zma:103639183"/>
<dbReference type="KEGG" id="zma:542293"/>
<dbReference type="MaizeGDB" id="51309"/>
<dbReference type="eggNOG" id="KOG0710">
    <property type="taxonomic scope" value="Eukaryota"/>
</dbReference>
<dbReference type="HOGENOM" id="CLU_046737_5_1_1"/>
<dbReference type="InParanoid" id="Q08275"/>
<dbReference type="OMA" id="TGRFERC"/>
<dbReference type="OrthoDB" id="2014994at2759"/>
<dbReference type="Proteomes" id="UP000007305">
    <property type="component" value="Chromosome 9"/>
</dbReference>
<dbReference type="ExpressionAtlas" id="Q08275">
    <property type="expression patterns" value="baseline and differential"/>
</dbReference>
<dbReference type="GO" id="GO:0005737">
    <property type="term" value="C:cytoplasm"/>
    <property type="evidence" value="ECO:0007669"/>
    <property type="project" value="UniProtKB-SubCell"/>
</dbReference>
<dbReference type="GO" id="GO:0051082">
    <property type="term" value="F:unfolded protein binding"/>
    <property type="evidence" value="ECO:0000318"/>
    <property type="project" value="GO_Central"/>
</dbReference>
<dbReference type="GO" id="GO:0051259">
    <property type="term" value="P:protein complex oligomerization"/>
    <property type="evidence" value="ECO:0000318"/>
    <property type="project" value="GO_Central"/>
</dbReference>
<dbReference type="GO" id="GO:0006457">
    <property type="term" value="P:protein folding"/>
    <property type="evidence" value="ECO:0000318"/>
    <property type="project" value="GO_Central"/>
</dbReference>
<dbReference type="GO" id="GO:0009408">
    <property type="term" value="P:response to heat"/>
    <property type="evidence" value="ECO:0000318"/>
    <property type="project" value="GO_Central"/>
</dbReference>
<dbReference type="GO" id="GO:0042542">
    <property type="term" value="P:response to hydrogen peroxide"/>
    <property type="evidence" value="ECO:0000318"/>
    <property type="project" value="GO_Central"/>
</dbReference>
<dbReference type="GO" id="GO:0009651">
    <property type="term" value="P:response to salt stress"/>
    <property type="evidence" value="ECO:0000318"/>
    <property type="project" value="GO_Central"/>
</dbReference>
<dbReference type="CDD" id="cd06464">
    <property type="entry name" value="ACD_sHsps-like"/>
    <property type="match status" value="1"/>
</dbReference>
<dbReference type="FunFam" id="2.60.40.790:FF:000010">
    <property type="entry name" value="17.3 kDa class II heat shock protein-like"/>
    <property type="match status" value="1"/>
</dbReference>
<dbReference type="Gene3D" id="2.60.40.790">
    <property type="match status" value="1"/>
</dbReference>
<dbReference type="InterPro" id="IPR002068">
    <property type="entry name" value="A-crystallin/Hsp20_dom"/>
</dbReference>
<dbReference type="InterPro" id="IPR008978">
    <property type="entry name" value="HSP20-like_chaperone"/>
</dbReference>
<dbReference type="InterPro" id="IPR031107">
    <property type="entry name" value="Small_HSP"/>
</dbReference>
<dbReference type="PANTHER" id="PTHR11527">
    <property type="entry name" value="HEAT-SHOCK PROTEIN 20 FAMILY MEMBER"/>
    <property type="match status" value="1"/>
</dbReference>
<dbReference type="Pfam" id="PF00011">
    <property type="entry name" value="HSP20"/>
    <property type="match status" value="1"/>
</dbReference>
<dbReference type="SUPFAM" id="SSF49764">
    <property type="entry name" value="HSP20-like chaperones"/>
    <property type="match status" value="1"/>
</dbReference>
<dbReference type="PROSITE" id="PS01031">
    <property type="entry name" value="SHSP"/>
    <property type="match status" value="1"/>
</dbReference>
<comment type="subcellular location">
    <subcellularLocation>
        <location>Cytoplasm</location>
    </subcellularLocation>
</comment>
<comment type="induction">
    <text>By stress; by heat shock.</text>
</comment>
<comment type="similarity">
    <text evidence="1">Belongs to the small heat shock protein (HSP20) family.</text>
</comment>